<organism>
    <name type="scientific">Myxococcus xanthus (strain DK1622)</name>
    <dbReference type="NCBI Taxonomy" id="246197"/>
    <lineage>
        <taxon>Bacteria</taxon>
        <taxon>Pseudomonadati</taxon>
        <taxon>Myxococcota</taxon>
        <taxon>Myxococcia</taxon>
        <taxon>Myxococcales</taxon>
        <taxon>Cystobacterineae</taxon>
        <taxon>Myxococcaceae</taxon>
        <taxon>Myxococcus</taxon>
    </lineage>
</organism>
<name>PYRB_MYXXD</name>
<comment type="function">
    <text evidence="1">Catalyzes the condensation of carbamoyl phosphate and aspartate to form carbamoyl aspartate and inorganic phosphate, the committed step in the de novo pyrimidine nucleotide biosynthesis pathway.</text>
</comment>
<comment type="catalytic activity">
    <reaction evidence="1">
        <text>carbamoyl phosphate + L-aspartate = N-carbamoyl-L-aspartate + phosphate + H(+)</text>
        <dbReference type="Rhea" id="RHEA:20013"/>
        <dbReference type="ChEBI" id="CHEBI:15378"/>
        <dbReference type="ChEBI" id="CHEBI:29991"/>
        <dbReference type="ChEBI" id="CHEBI:32814"/>
        <dbReference type="ChEBI" id="CHEBI:43474"/>
        <dbReference type="ChEBI" id="CHEBI:58228"/>
        <dbReference type="EC" id="2.1.3.2"/>
    </reaction>
</comment>
<comment type="pathway">
    <text evidence="1">Pyrimidine metabolism; UMP biosynthesis via de novo pathway; (S)-dihydroorotate from bicarbonate: step 2/3.</text>
</comment>
<comment type="subunit">
    <text evidence="1">Heterododecamer (2C3:3R2) of six catalytic PyrB chains organized as two trimers (C3), and six regulatory PyrI chains organized as three dimers (R2).</text>
</comment>
<comment type="similarity">
    <text evidence="1">Belongs to the aspartate/ornithine carbamoyltransferase superfamily. ATCase family.</text>
</comment>
<dbReference type="EC" id="2.1.3.2" evidence="1"/>
<dbReference type="EMBL" id="CP000113">
    <property type="protein sequence ID" value="ABF90384.1"/>
    <property type="molecule type" value="Genomic_DNA"/>
</dbReference>
<dbReference type="RefSeq" id="WP_011553540.1">
    <property type="nucleotide sequence ID" value="NC_008095.1"/>
</dbReference>
<dbReference type="SMR" id="Q1D6L9"/>
<dbReference type="STRING" id="246197.MXAN_3510"/>
<dbReference type="EnsemblBacteria" id="ABF90384">
    <property type="protein sequence ID" value="ABF90384"/>
    <property type="gene ID" value="MXAN_3510"/>
</dbReference>
<dbReference type="GeneID" id="41360855"/>
<dbReference type="KEGG" id="mxa:MXAN_3510"/>
<dbReference type="eggNOG" id="COG0540">
    <property type="taxonomic scope" value="Bacteria"/>
</dbReference>
<dbReference type="HOGENOM" id="CLU_043846_2_0_7"/>
<dbReference type="OrthoDB" id="9774690at2"/>
<dbReference type="UniPathway" id="UPA00070">
    <property type="reaction ID" value="UER00116"/>
</dbReference>
<dbReference type="Proteomes" id="UP000002402">
    <property type="component" value="Chromosome"/>
</dbReference>
<dbReference type="GO" id="GO:0005829">
    <property type="term" value="C:cytosol"/>
    <property type="evidence" value="ECO:0007669"/>
    <property type="project" value="TreeGrafter"/>
</dbReference>
<dbReference type="GO" id="GO:0016597">
    <property type="term" value="F:amino acid binding"/>
    <property type="evidence" value="ECO:0007669"/>
    <property type="project" value="InterPro"/>
</dbReference>
<dbReference type="GO" id="GO:0004070">
    <property type="term" value="F:aspartate carbamoyltransferase activity"/>
    <property type="evidence" value="ECO:0007669"/>
    <property type="project" value="UniProtKB-UniRule"/>
</dbReference>
<dbReference type="GO" id="GO:0006207">
    <property type="term" value="P:'de novo' pyrimidine nucleobase biosynthetic process"/>
    <property type="evidence" value="ECO:0007669"/>
    <property type="project" value="InterPro"/>
</dbReference>
<dbReference type="GO" id="GO:0044205">
    <property type="term" value="P:'de novo' UMP biosynthetic process"/>
    <property type="evidence" value="ECO:0007669"/>
    <property type="project" value="UniProtKB-UniRule"/>
</dbReference>
<dbReference type="GO" id="GO:0006520">
    <property type="term" value="P:amino acid metabolic process"/>
    <property type="evidence" value="ECO:0007669"/>
    <property type="project" value="InterPro"/>
</dbReference>
<dbReference type="FunFam" id="3.40.50.1370:FF:000007">
    <property type="entry name" value="Aspartate carbamoyltransferase"/>
    <property type="match status" value="1"/>
</dbReference>
<dbReference type="Gene3D" id="3.40.50.1370">
    <property type="entry name" value="Aspartate/ornithine carbamoyltransferase"/>
    <property type="match status" value="2"/>
</dbReference>
<dbReference type="HAMAP" id="MF_00001">
    <property type="entry name" value="Asp_carb_tr"/>
    <property type="match status" value="1"/>
</dbReference>
<dbReference type="InterPro" id="IPR006132">
    <property type="entry name" value="Asp/Orn_carbamoyltranf_P-bd"/>
</dbReference>
<dbReference type="InterPro" id="IPR006130">
    <property type="entry name" value="Asp/Orn_carbamoylTrfase"/>
</dbReference>
<dbReference type="InterPro" id="IPR036901">
    <property type="entry name" value="Asp/Orn_carbamoylTrfase_sf"/>
</dbReference>
<dbReference type="InterPro" id="IPR002082">
    <property type="entry name" value="Asp_carbamoyltransf"/>
</dbReference>
<dbReference type="InterPro" id="IPR006131">
    <property type="entry name" value="Asp_carbamoyltransf_Asp/Orn-bd"/>
</dbReference>
<dbReference type="NCBIfam" id="TIGR00670">
    <property type="entry name" value="asp_carb_tr"/>
    <property type="match status" value="1"/>
</dbReference>
<dbReference type="NCBIfam" id="NF002032">
    <property type="entry name" value="PRK00856.1"/>
    <property type="match status" value="1"/>
</dbReference>
<dbReference type="PANTHER" id="PTHR45753:SF6">
    <property type="entry name" value="ASPARTATE CARBAMOYLTRANSFERASE"/>
    <property type="match status" value="1"/>
</dbReference>
<dbReference type="PANTHER" id="PTHR45753">
    <property type="entry name" value="ORNITHINE CARBAMOYLTRANSFERASE, MITOCHONDRIAL"/>
    <property type="match status" value="1"/>
</dbReference>
<dbReference type="Pfam" id="PF00185">
    <property type="entry name" value="OTCace"/>
    <property type="match status" value="1"/>
</dbReference>
<dbReference type="Pfam" id="PF02729">
    <property type="entry name" value="OTCace_N"/>
    <property type="match status" value="1"/>
</dbReference>
<dbReference type="PRINTS" id="PR00100">
    <property type="entry name" value="AOTCASE"/>
</dbReference>
<dbReference type="PRINTS" id="PR00101">
    <property type="entry name" value="ATCASE"/>
</dbReference>
<dbReference type="SUPFAM" id="SSF53671">
    <property type="entry name" value="Aspartate/ornithine carbamoyltransferase"/>
    <property type="match status" value="1"/>
</dbReference>
<dbReference type="PROSITE" id="PS00097">
    <property type="entry name" value="CARBAMOYLTRANSFERASE"/>
    <property type="match status" value="1"/>
</dbReference>
<sequence length="297" mass="31933">MRHLLGIEGWRRDELESLLDRAKAHLPGGPDTTHLLRGKVVANLFFEDSTRTRTSFHMAAKGLGASVLNWTHTGSSVSKGETLLDTARNIEATGPVAIVMRHRSSGAPHLVAKHVKCAVINAGDGTHEHPSQALLDAFTLRQRWGSLDGRTVLIVGDVLHSRVARSNLHCLKALGAQVVMCGPPTLLPPGLESLGAEVTHNLDAALPRADAVMCLRVQLERQEQAFLPSTREYARLFGLNAAREERMKAGAVVMHPGPINRGVELAPAVADGARSVILEQVSNGVAVRRAILEVCTA</sequence>
<keyword id="KW-0665">Pyrimidine biosynthesis</keyword>
<keyword id="KW-1185">Reference proteome</keyword>
<keyword id="KW-0808">Transferase</keyword>
<feature type="chain" id="PRO_0000301595" description="Aspartate carbamoyltransferase catalytic subunit">
    <location>
        <begin position="1"/>
        <end position="297"/>
    </location>
</feature>
<feature type="binding site" evidence="1">
    <location>
        <position position="51"/>
    </location>
    <ligand>
        <name>carbamoyl phosphate</name>
        <dbReference type="ChEBI" id="CHEBI:58228"/>
    </ligand>
</feature>
<feature type="binding site" evidence="1">
    <location>
        <position position="52"/>
    </location>
    <ligand>
        <name>carbamoyl phosphate</name>
        <dbReference type="ChEBI" id="CHEBI:58228"/>
    </ligand>
</feature>
<feature type="binding site" evidence="1">
    <location>
        <position position="79"/>
    </location>
    <ligand>
        <name>L-aspartate</name>
        <dbReference type="ChEBI" id="CHEBI:29991"/>
    </ligand>
</feature>
<feature type="binding site" evidence="1">
    <location>
        <position position="101"/>
    </location>
    <ligand>
        <name>carbamoyl phosphate</name>
        <dbReference type="ChEBI" id="CHEBI:58228"/>
    </ligand>
</feature>
<feature type="binding site" evidence="1">
    <location>
        <position position="129"/>
    </location>
    <ligand>
        <name>carbamoyl phosphate</name>
        <dbReference type="ChEBI" id="CHEBI:58228"/>
    </ligand>
</feature>
<feature type="binding site" evidence="1">
    <location>
        <position position="132"/>
    </location>
    <ligand>
        <name>carbamoyl phosphate</name>
        <dbReference type="ChEBI" id="CHEBI:58228"/>
    </ligand>
</feature>
<feature type="binding site" evidence="1">
    <location>
        <position position="162"/>
    </location>
    <ligand>
        <name>L-aspartate</name>
        <dbReference type="ChEBI" id="CHEBI:29991"/>
    </ligand>
</feature>
<feature type="binding site" evidence="1">
    <location>
        <position position="216"/>
    </location>
    <ligand>
        <name>L-aspartate</name>
        <dbReference type="ChEBI" id="CHEBI:29991"/>
    </ligand>
</feature>
<feature type="binding site" evidence="1">
    <location>
        <position position="257"/>
    </location>
    <ligand>
        <name>carbamoyl phosphate</name>
        <dbReference type="ChEBI" id="CHEBI:58228"/>
    </ligand>
</feature>
<feature type="binding site" evidence="1">
    <location>
        <position position="258"/>
    </location>
    <ligand>
        <name>carbamoyl phosphate</name>
        <dbReference type="ChEBI" id="CHEBI:58228"/>
    </ligand>
</feature>
<evidence type="ECO:0000255" key="1">
    <source>
        <dbReference type="HAMAP-Rule" id="MF_00001"/>
    </source>
</evidence>
<reference key="1">
    <citation type="journal article" date="2006" name="Proc. Natl. Acad. Sci. U.S.A.">
        <title>Evolution of sensory complexity recorded in a myxobacterial genome.</title>
        <authorList>
            <person name="Goldman B.S."/>
            <person name="Nierman W.C."/>
            <person name="Kaiser D."/>
            <person name="Slater S.C."/>
            <person name="Durkin A.S."/>
            <person name="Eisen J.A."/>
            <person name="Ronning C.M."/>
            <person name="Barbazuk W.B."/>
            <person name="Blanchard M."/>
            <person name="Field C."/>
            <person name="Halling C."/>
            <person name="Hinkle G."/>
            <person name="Iartchuk O."/>
            <person name="Kim H.S."/>
            <person name="Mackenzie C."/>
            <person name="Madupu R."/>
            <person name="Miller N."/>
            <person name="Shvartsbeyn A."/>
            <person name="Sullivan S.A."/>
            <person name="Vaudin M."/>
            <person name="Wiegand R."/>
            <person name="Kaplan H.B."/>
        </authorList>
    </citation>
    <scope>NUCLEOTIDE SEQUENCE [LARGE SCALE GENOMIC DNA]</scope>
    <source>
        <strain>DK1622</strain>
    </source>
</reference>
<protein>
    <recommendedName>
        <fullName evidence="1">Aspartate carbamoyltransferase catalytic subunit</fullName>
        <ecNumber evidence="1">2.1.3.2</ecNumber>
    </recommendedName>
    <alternativeName>
        <fullName evidence="1">Aspartate transcarbamylase</fullName>
        <shortName evidence="1">ATCase</shortName>
    </alternativeName>
</protein>
<accession>Q1D6L9</accession>
<gene>
    <name evidence="1" type="primary">pyrB</name>
    <name type="ordered locus">MXAN_3510</name>
</gene>
<proteinExistence type="inferred from homology"/>